<reference key="1">
    <citation type="journal article" date="1995" name="Eur. J. Biochem.">
        <title>Purification and characterization of the arylsulfatase synthesized by Pseudomonas aeruginosa PAO during growth in sulfate-free medium and cloning of the arylsulfatase gene (atsA).</title>
        <authorList>
            <person name="Beil S."/>
            <person name="Kehrli H."/>
            <person name="James P."/>
            <person name="Staudenmann W."/>
            <person name="Cook A.M."/>
            <person name="Leisinger T."/>
            <person name="Kertesz M.A."/>
        </authorList>
    </citation>
    <scope>NUCLEOTIDE SEQUENCE [GENOMIC DNA]</scope>
    <scope>PARTIAL PROTEIN SEQUENCE</scope>
    <scope>FUNCTION</scope>
    <scope>CATALYTIC ACTIVITY</scope>
    <source>
        <strain>ATCC 15692 / DSM 22644 / CIP 104116 / JCM 14847 / LMG 12228 / 1C / PRS 101 / PAO1</strain>
    </source>
</reference>
<reference key="2">
    <citation type="submission" date="1999-08" db="EMBL/GenBank/DDBJ databases">
        <authorList>
            <person name="Kertesz M.A."/>
        </authorList>
    </citation>
    <scope>SEQUENCE REVISION</scope>
</reference>
<reference key="3">
    <citation type="journal article" date="2000" name="Nature">
        <title>Complete genome sequence of Pseudomonas aeruginosa PAO1, an opportunistic pathogen.</title>
        <authorList>
            <person name="Stover C.K."/>
            <person name="Pham X.-Q.T."/>
            <person name="Erwin A.L."/>
            <person name="Mizoguchi S.D."/>
            <person name="Warrener P."/>
            <person name="Hickey M.J."/>
            <person name="Brinkman F.S.L."/>
            <person name="Hufnagle W.O."/>
            <person name="Kowalik D.J."/>
            <person name="Lagrou M."/>
            <person name="Garber R.L."/>
            <person name="Goltry L."/>
            <person name="Tolentino E."/>
            <person name="Westbrock-Wadman S."/>
            <person name="Yuan Y."/>
            <person name="Brody L.L."/>
            <person name="Coulter S.N."/>
            <person name="Folger K.R."/>
            <person name="Kas A."/>
            <person name="Larbig K."/>
            <person name="Lim R.M."/>
            <person name="Smith K.A."/>
            <person name="Spencer D.H."/>
            <person name="Wong G.K.-S."/>
            <person name="Wu Z."/>
            <person name="Paulsen I.T."/>
            <person name="Reizer J."/>
            <person name="Saier M.H. Jr."/>
            <person name="Hancock R.E.W."/>
            <person name="Lory S."/>
            <person name="Olson M.V."/>
        </authorList>
    </citation>
    <scope>NUCLEOTIDE SEQUENCE [LARGE SCALE GENOMIC DNA]</scope>
    <source>
        <strain>ATCC 15692 / DSM 22644 / CIP 104116 / JCM 14847 / LMG 12228 / 1C / PRS 101 / PAO1</strain>
    </source>
</reference>
<reference key="4">
    <citation type="journal article" date="1998" name="J. Biol. Chem.">
        <title>Posttranslational formation of formylglycine in prokaryotic sulfatases by modification of either cysteine or serine.</title>
        <authorList>
            <person name="Dierks T."/>
            <person name="Miech C."/>
            <person name="Hummerjohann J."/>
            <person name="Schmidt B."/>
            <person name="Kertesz M.A."/>
            <person name="von Figura K."/>
        </authorList>
    </citation>
    <scope>FUNCTION</scope>
    <scope>CATALYTIC ACTIVITY</scope>
    <scope>OXOALANINE AT CYS-51</scope>
    <scope>MUTAGENESIS OF CYS-51</scope>
</reference>
<reference key="5">
    <citation type="journal article" date="2001" name="Structure">
        <title>1.3 A structure of arylsulfatase from Pseudomonas aeruginosa establishes the catalytic mechanism of sulfate ester cleavage in the sulfatase family.</title>
        <authorList>
            <person name="Boltes I."/>
            <person name="Czapinska H."/>
            <person name="Kahnert A."/>
            <person name="von Buelow R."/>
            <person name="Dierks T."/>
            <person name="Schmidt B."/>
            <person name="von Figura K."/>
            <person name="Kertesz M.A."/>
            <person name="Uson I."/>
        </authorList>
    </citation>
    <scope>X-RAY CRYSTALLOGRAPHY (1.3 ANGSTROMS)</scope>
    <scope>OXOALANINE AT CYS-51</scope>
</reference>
<protein>
    <recommendedName>
        <fullName>Arylsulfatase</fullName>
        <shortName>AS</shortName>
        <ecNumber evidence="3 4">3.1.6.1</ecNumber>
    </recommendedName>
    <alternativeName>
        <fullName>Aryl-sulfate sulphohydrolase</fullName>
    </alternativeName>
</protein>
<gene>
    <name type="primary">atsA</name>
    <name type="ordered locus">PA0183</name>
</gene>
<name>ARS_PSEAE</name>
<accession>P51691</accession>
<organism>
    <name type="scientific">Pseudomonas aeruginosa (strain ATCC 15692 / DSM 22644 / CIP 104116 / JCM 14847 / LMG 12228 / 1C / PRS 101 / PAO1)</name>
    <dbReference type="NCBI Taxonomy" id="208964"/>
    <lineage>
        <taxon>Bacteria</taxon>
        <taxon>Pseudomonadati</taxon>
        <taxon>Pseudomonadota</taxon>
        <taxon>Gammaproteobacteria</taxon>
        <taxon>Pseudomonadales</taxon>
        <taxon>Pseudomonadaceae</taxon>
        <taxon>Pseudomonas</taxon>
    </lineage>
</organism>
<evidence type="ECO:0000250" key="1">
    <source>
        <dbReference type="UniProtKB" id="P15289"/>
    </source>
</evidence>
<evidence type="ECO:0000269" key="2">
    <source>
    </source>
</evidence>
<evidence type="ECO:0000269" key="3">
    <source>
    </source>
</evidence>
<evidence type="ECO:0000269" key="4">
    <source>
    </source>
</evidence>
<evidence type="ECO:0000305" key="5"/>
<evidence type="ECO:0007829" key="6">
    <source>
        <dbReference type="PDB" id="1HDH"/>
    </source>
</evidence>
<dbReference type="EC" id="3.1.6.1" evidence="3 4"/>
<dbReference type="EMBL" id="Z48540">
    <property type="protein sequence ID" value="CAA88421.2"/>
    <property type="molecule type" value="Genomic_DNA"/>
</dbReference>
<dbReference type="EMBL" id="AE004091">
    <property type="protein sequence ID" value="AAG03573.1"/>
    <property type="molecule type" value="Genomic_DNA"/>
</dbReference>
<dbReference type="PIR" id="D83622">
    <property type="entry name" value="D83622"/>
</dbReference>
<dbReference type="PIR" id="S69336">
    <property type="entry name" value="S69336"/>
</dbReference>
<dbReference type="RefSeq" id="NP_248873.1">
    <property type="nucleotide sequence ID" value="NC_002516.2"/>
</dbReference>
<dbReference type="RefSeq" id="WP_003106692.1">
    <property type="nucleotide sequence ID" value="NZ_QZGE01000015.1"/>
</dbReference>
<dbReference type="PDB" id="1HDH">
    <property type="method" value="X-ray"/>
    <property type="resolution" value="1.30 A"/>
    <property type="chains" value="A/B=1-536"/>
</dbReference>
<dbReference type="PDB" id="4CXK">
    <property type="method" value="X-ray"/>
    <property type="resolution" value="1.86 A"/>
    <property type="chains" value="A/B=1-534"/>
</dbReference>
<dbReference type="PDB" id="4CXS">
    <property type="method" value="X-ray"/>
    <property type="resolution" value="2.30 A"/>
    <property type="chains" value="A/B=1-536"/>
</dbReference>
<dbReference type="PDB" id="4CXU">
    <property type="method" value="X-ray"/>
    <property type="resolution" value="2.03 A"/>
    <property type="chains" value="A/B=1-536"/>
</dbReference>
<dbReference type="PDB" id="4CYR">
    <property type="method" value="X-ray"/>
    <property type="resolution" value="1.72 A"/>
    <property type="chains" value="A/B=1-536"/>
</dbReference>
<dbReference type="PDB" id="4CYS">
    <property type="method" value="X-ray"/>
    <property type="resolution" value="1.88 A"/>
    <property type="chains" value="A/B=1-536"/>
</dbReference>
<dbReference type="PDB" id="5AJ9">
    <property type="method" value="X-ray"/>
    <property type="resolution" value="2.00 A"/>
    <property type="chains" value="A/B=1-536"/>
</dbReference>
<dbReference type="PDBsum" id="1HDH"/>
<dbReference type="PDBsum" id="4CXK"/>
<dbReference type="PDBsum" id="4CXS"/>
<dbReference type="PDBsum" id="4CXU"/>
<dbReference type="PDBsum" id="4CYR"/>
<dbReference type="PDBsum" id="4CYS"/>
<dbReference type="PDBsum" id="5AJ9"/>
<dbReference type="SMR" id="P51691"/>
<dbReference type="FunCoup" id="P51691">
    <property type="interactions" value="153"/>
</dbReference>
<dbReference type="STRING" id="208964.PA0183"/>
<dbReference type="BindingDB" id="P51691"/>
<dbReference type="ChEMBL" id="CHEMBL5816"/>
<dbReference type="DrugBank" id="DB02289">
    <property type="generic name" value="2-Aminopropanedioic Acid"/>
</dbReference>
<dbReference type="PaxDb" id="208964-PA0183"/>
<dbReference type="GeneID" id="879288"/>
<dbReference type="KEGG" id="pae:PA0183"/>
<dbReference type="PATRIC" id="fig|208964.12.peg.189"/>
<dbReference type="PseudoCAP" id="PA0183"/>
<dbReference type="HOGENOM" id="CLU_006332_11_1_6"/>
<dbReference type="InParanoid" id="P51691"/>
<dbReference type="OrthoDB" id="9803751at2"/>
<dbReference type="PhylomeDB" id="P51691"/>
<dbReference type="BioCyc" id="MetaCyc:MONOMER-20682"/>
<dbReference type="BioCyc" id="PAER208964:G1FZ6-184-MONOMER"/>
<dbReference type="BRENDA" id="3.1.6.1">
    <property type="organism ID" value="5087"/>
</dbReference>
<dbReference type="BRENDA" id="3.1.6.2">
    <property type="organism ID" value="5087"/>
</dbReference>
<dbReference type="EvolutionaryTrace" id="P51691"/>
<dbReference type="PRO" id="PR:P51691"/>
<dbReference type="Proteomes" id="UP000002438">
    <property type="component" value="Chromosome"/>
</dbReference>
<dbReference type="GO" id="GO:0005737">
    <property type="term" value="C:cytoplasm"/>
    <property type="evidence" value="ECO:0007669"/>
    <property type="project" value="UniProtKB-SubCell"/>
</dbReference>
<dbReference type="GO" id="GO:0004065">
    <property type="term" value="F:arylsulfatase activity"/>
    <property type="evidence" value="ECO:0000314"/>
    <property type="project" value="UniProtKB"/>
</dbReference>
<dbReference type="GO" id="GO:0046872">
    <property type="term" value="F:metal ion binding"/>
    <property type="evidence" value="ECO:0007669"/>
    <property type="project" value="UniProtKB-KW"/>
</dbReference>
<dbReference type="GO" id="GO:0008081">
    <property type="term" value="F:phosphoric diester hydrolase activity"/>
    <property type="evidence" value="ECO:0000314"/>
    <property type="project" value="PseudoCAP"/>
</dbReference>
<dbReference type="CDD" id="cd16025">
    <property type="entry name" value="PAS_like"/>
    <property type="match status" value="1"/>
</dbReference>
<dbReference type="FunFam" id="3.40.720.10:FF:000044">
    <property type="entry name" value="Arylsulfatase"/>
    <property type="match status" value="1"/>
</dbReference>
<dbReference type="FunFam" id="3.30.1120.10:FF:000005">
    <property type="entry name" value="Arylsulfatase A"/>
    <property type="match status" value="1"/>
</dbReference>
<dbReference type="Gene3D" id="3.30.1120.10">
    <property type="match status" value="1"/>
</dbReference>
<dbReference type="Gene3D" id="3.40.720.10">
    <property type="entry name" value="Alkaline Phosphatase, subunit A"/>
    <property type="match status" value="1"/>
</dbReference>
<dbReference type="InterPro" id="IPR017850">
    <property type="entry name" value="Alkaline_phosphatase_core_sf"/>
</dbReference>
<dbReference type="InterPro" id="IPR050738">
    <property type="entry name" value="Sulfatase"/>
</dbReference>
<dbReference type="InterPro" id="IPR024607">
    <property type="entry name" value="Sulfatase_CS"/>
</dbReference>
<dbReference type="InterPro" id="IPR000917">
    <property type="entry name" value="Sulfatase_N"/>
</dbReference>
<dbReference type="PANTHER" id="PTHR42693:SF33">
    <property type="entry name" value="ARYLSULFATASE"/>
    <property type="match status" value="1"/>
</dbReference>
<dbReference type="PANTHER" id="PTHR42693">
    <property type="entry name" value="ARYLSULFATASE FAMILY MEMBER"/>
    <property type="match status" value="1"/>
</dbReference>
<dbReference type="Pfam" id="PF00884">
    <property type="entry name" value="Sulfatase"/>
    <property type="match status" value="1"/>
</dbReference>
<dbReference type="SUPFAM" id="SSF53649">
    <property type="entry name" value="Alkaline phosphatase-like"/>
    <property type="match status" value="1"/>
</dbReference>
<dbReference type="PROSITE" id="PS00523">
    <property type="entry name" value="SULFATASE_1"/>
    <property type="match status" value="1"/>
</dbReference>
<dbReference type="PROSITE" id="PS00149">
    <property type="entry name" value="SULFATASE_2"/>
    <property type="match status" value="1"/>
</dbReference>
<keyword id="KW-0002">3D-structure</keyword>
<keyword id="KW-0106">Calcium</keyword>
<keyword id="KW-0963">Cytoplasm</keyword>
<keyword id="KW-0903">Direct protein sequencing</keyword>
<keyword id="KW-0378">Hydrolase</keyword>
<keyword id="KW-0479">Metal-binding</keyword>
<keyword id="KW-1185">Reference proteome</keyword>
<proteinExistence type="evidence at protein level"/>
<comment type="function">
    <text evidence="3 4">Hydrolyzes the bond between sulfate and the aromatic ring in a compound such as 4-nitrocatechol sulfate.</text>
</comment>
<comment type="catalytic activity">
    <reaction evidence="3 4">
        <text>an aryl sulfate + H2O = a phenol + sulfate + H(+)</text>
        <dbReference type="Rhea" id="RHEA:17261"/>
        <dbReference type="ChEBI" id="CHEBI:15377"/>
        <dbReference type="ChEBI" id="CHEBI:15378"/>
        <dbReference type="ChEBI" id="CHEBI:16189"/>
        <dbReference type="ChEBI" id="CHEBI:33853"/>
        <dbReference type="ChEBI" id="CHEBI:140317"/>
        <dbReference type="EC" id="3.1.6.1"/>
    </reaction>
</comment>
<comment type="cofactor">
    <cofactor evidence="2">
        <name>Ca(2+)</name>
        <dbReference type="ChEBI" id="CHEBI:29108"/>
    </cofactor>
    <text evidence="2">Binds 1 Ca(2+) ion per subunit.</text>
</comment>
<comment type="biophysicochemical properties">
    <phDependence>
        <text>Optimum pH is 8.9.</text>
    </phDependence>
    <temperatureDependence>
        <text>Optimum temperature is 57 degrees Celsius. Incubation that exceeds 20 minutes above 50 degrees Celsius leads to enzyme inactivation.</text>
    </temperatureDependence>
</comment>
<comment type="subunit">
    <text>Monomer.</text>
</comment>
<comment type="subcellular location">
    <subcellularLocation>
        <location evidence="5">Cytoplasm</location>
    </subcellularLocation>
</comment>
<comment type="PTM">
    <text evidence="2 4">The conversion to 3-oxoalanine (also known as C-formylglycine, FGly), of a serine or cysteine residue in prokaryotes and of a cysteine residue in eukaryotes, is critical for catalytic activity.</text>
</comment>
<comment type="similarity">
    <text evidence="5">Belongs to the sulfatase family.</text>
</comment>
<feature type="initiator methionine" description="Removed" evidence="3">
    <location>
        <position position="1"/>
    </location>
</feature>
<feature type="chain" id="PRO_0000192683" description="Arylsulfatase">
    <location>
        <begin position="2"/>
        <end position="536"/>
    </location>
</feature>
<feature type="active site" description="Nucleophile" evidence="2 4">
    <location>
        <position position="51"/>
    </location>
</feature>
<feature type="active site" evidence="1">
    <location>
        <position position="115"/>
    </location>
</feature>
<feature type="binding site" evidence="2">
    <location>
        <position position="13"/>
    </location>
    <ligand>
        <name>Ca(2+)</name>
        <dbReference type="ChEBI" id="CHEBI:29108"/>
    </ligand>
</feature>
<feature type="binding site" evidence="2">
    <location>
        <position position="14"/>
    </location>
    <ligand>
        <name>Ca(2+)</name>
        <dbReference type="ChEBI" id="CHEBI:29108"/>
    </ligand>
</feature>
<feature type="binding site" description="via 3-oxoalanine" evidence="2">
    <location>
        <position position="51"/>
    </location>
    <ligand>
        <name>Ca(2+)</name>
        <dbReference type="ChEBI" id="CHEBI:29108"/>
    </ligand>
</feature>
<feature type="binding site" evidence="2">
    <location>
        <position position="317"/>
    </location>
    <ligand>
        <name>Ca(2+)</name>
        <dbReference type="ChEBI" id="CHEBI:29108"/>
    </ligand>
</feature>
<feature type="binding site" evidence="2">
    <location>
        <position position="318"/>
    </location>
    <ligand>
        <name>Ca(2+)</name>
        <dbReference type="ChEBI" id="CHEBI:29108"/>
    </ligand>
</feature>
<feature type="modified residue" description="3-oxoalanine (Cys)" evidence="2 4">
    <location>
        <position position="51"/>
    </location>
</feature>
<feature type="mutagenesis site" description="Abolishes formation of 3-oxoalanine (also known as C-formylglycine, FGly). Strongly reduced enzyme activity." evidence="4">
    <original>C</original>
    <variation>S</variation>
    <location>
        <position position="51"/>
    </location>
</feature>
<feature type="sequence conflict" description="In Ref. 1; AA sequence." evidence="5" ref="1">
    <original>S</original>
    <variation>D</variation>
    <location>
        <position position="2"/>
    </location>
</feature>
<feature type="strand" evidence="6">
    <location>
        <begin position="6"/>
        <end position="14"/>
    </location>
</feature>
<feature type="helix" evidence="6">
    <location>
        <begin position="21"/>
        <end position="23"/>
    </location>
</feature>
<feature type="helix" evidence="6">
    <location>
        <begin position="30"/>
        <end position="38"/>
    </location>
</feature>
<feature type="strand" evidence="6">
    <location>
        <begin position="39"/>
        <end position="46"/>
    </location>
</feature>
<feature type="helix" evidence="6">
    <location>
        <begin position="51"/>
        <end position="58"/>
    </location>
</feature>
<feature type="helix" evidence="6">
    <location>
        <begin position="64"/>
        <end position="67"/>
    </location>
</feature>
<feature type="helix" evidence="6">
    <location>
        <begin position="73"/>
        <end position="75"/>
    </location>
</feature>
<feature type="turn" evidence="6">
    <location>
        <begin position="78"/>
        <end position="82"/>
    </location>
</feature>
<feature type="strand" evidence="6">
    <location>
        <begin position="87"/>
        <end position="89"/>
    </location>
</feature>
<feature type="strand" evidence="6">
    <location>
        <begin position="92"/>
        <end position="94"/>
    </location>
</feature>
<feature type="helix" evidence="6">
    <location>
        <begin position="97"/>
        <end position="102"/>
    </location>
</feature>
<feature type="turn" evidence="6">
    <location>
        <begin position="103"/>
        <end position="105"/>
    </location>
</feature>
<feature type="strand" evidence="6">
    <location>
        <begin position="107"/>
        <end position="113"/>
    </location>
</feature>
<feature type="helix" evidence="6">
    <location>
        <begin position="120"/>
        <end position="122"/>
    </location>
</feature>
<feature type="turn" evidence="6">
    <location>
        <begin position="124"/>
        <end position="128"/>
    </location>
</feature>
<feature type="strand" evidence="6">
    <location>
        <begin position="130"/>
        <end position="135"/>
    </location>
</feature>
<feature type="helix" evidence="6">
    <location>
        <begin position="155"/>
        <end position="158"/>
    </location>
</feature>
<feature type="strand" evidence="6">
    <location>
        <begin position="164"/>
        <end position="166"/>
    </location>
</feature>
<feature type="helix" evidence="6">
    <location>
        <begin position="180"/>
        <end position="193"/>
    </location>
</feature>
<feature type="strand" evidence="6">
    <location>
        <begin position="201"/>
        <end position="206"/>
    </location>
</feature>
<feature type="strand" evidence="6">
    <location>
        <begin position="211"/>
        <end position="213"/>
    </location>
</feature>
<feature type="helix" evidence="6">
    <location>
        <begin position="218"/>
        <end position="221"/>
    </location>
</feature>
<feature type="helix" evidence="6">
    <location>
        <begin position="222"/>
        <end position="224"/>
    </location>
</feature>
<feature type="turn" evidence="6">
    <location>
        <begin position="225"/>
        <end position="230"/>
    </location>
</feature>
<feature type="helix" evidence="6">
    <location>
        <begin position="231"/>
        <end position="245"/>
    </location>
</feature>
<feature type="helix" evidence="6">
    <location>
        <begin position="265"/>
        <end position="267"/>
    </location>
</feature>
<feature type="helix" evidence="6">
    <location>
        <begin position="270"/>
        <end position="303"/>
    </location>
</feature>
<feature type="helix" evidence="6">
    <location>
        <begin position="307"/>
        <end position="309"/>
    </location>
</feature>
<feature type="strand" evidence="6">
    <location>
        <begin position="310"/>
        <end position="319"/>
    </location>
</feature>
<feature type="helix" evidence="6">
    <location>
        <begin position="325"/>
        <end position="327"/>
    </location>
</feature>
<feature type="helix" evidence="6">
    <location>
        <begin position="329"/>
        <end position="331"/>
    </location>
</feature>
<feature type="helix" evidence="6">
    <location>
        <begin position="335"/>
        <end position="342"/>
    </location>
</feature>
<feature type="helix" evidence="6">
    <location>
        <begin position="347"/>
        <end position="349"/>
    </location>
</feature>
<feature type="helix" evidence="6">
    <location>
        <begin position="360"/>
        <end position="368"/>
    </location>
</feature>
<feature type="strand" evidence="6">
    <location>
        <begin position="371"/>
        <end position="373"/>
    </location>
</feature>
<feature type="strand" evidence="6">
    <location>
        <begin position="377"/>
        <end position="379"/>
    </location>
</feature>
<feature type="helix" evidence="6">
    <location>
        <begin position="380"/>
        <end position="383"/>
    </location>
</feature>
<feature type="strand" evidence="6">
    <location>
        <begin position="387"/>
        <end position="390"/>
    </location>
</feature>
<feature type="strand" evidence="6">
    <location>
        <begin position="398"/>
        <end position="401"/>
    </location>
</feature>
<feature type="helix" evidence="6">
    <location>
        <begin position="407"/>
        <end position="409"/>
    </location>
</feature>
<feature type="helix" evidence="6">
    <location>
        <begin position="410"/>
        <end position="418"/>
    </location>
</feature>
<feature type="strand" evidence="6">
    <location>
        <begin position="425"/>
        <end position="427"/>
    </location>
</feature>
<feature type="helix" evidence="6">
    <location>
        <begin position="441"/>
        <end position="444"/>
    </location>
</feature>
<feature type="strand" evidence="6">
    <location>
        <begin position="447"/>
        <end position="449"/>
    </location>
</feature>
<feature type="strand" evidence="6">
    <location>
        <begin position="457"/>
        <end position="462"/>
    </location>
</feature>
<feature type="strand" evidence="6">
    <location>
        <begin position="465"/>
        <end position="470"/>
    </location>
</feature>
<feature type="strand" evidence="6">
    <location>
        <begin position="473"/>
        <end position="477"/>
    </location>
</feature>
<feature type="turn" evidence="6">
    <location>
        <begin position="480"/>
        <end position="482"/>
    </location>
</feature>
<feature type="strand" evidence="6">
    <location>
        <begin position="485"/>
        <end position="491"/>
    </location>
</feature>
<feature type="turn" evidence="6">
    <location>
        <begin position="492"/>
        <end position="494"/>
    </location>
</feature>
<feature type="turn" evidence="6">
    <location>
        <begin position="503"/>
        <end position="505"/>
    </location>
</feature>
<feature type="helix" evidence="6">
    <location>
        <begin position="507"/>
        <end position="524"/>
    </location>
</feature>
<sequence>MSKRPNFLVIVADDLGFSDIGAFGGEIATPNLDALAIAGLRLTDFHTASTCSPTRSMLLTGTDHHIAGIGTMAEALTPELEGKPGYEGHLNERVVALPELLREAGYQTLMAGKWHLGLKPEQTPHARGFERSFSLLPGAANHYGFEPPYDESTPRILKGTPALYVEDERYLDTLPEGFYSSDAFGDKLLQYLKERDQSRPFFAYLPFSAPHWPLQAPREIVEKYRGRYDAGPEALRQERLARLKELGLVEADVEAHPVLALTREWEALEDEERAKSARAMEVYAAMVERMDWNIGRVVDYLRRQGELDNTFVLFMSDNGAEGALLEAFPKFGPDLLGFLDRHYDNSLENIGRANSYVWYGPRWAQAATAPSRLYKAFTTQGGIRVPALVRYPRLSRQGAISHAFATVMDVTPTLLDLAGVRHPGKRWRGREIAEPRGRSWLGWLSGETEAAHDENTVTGWELFGMRAIRQGDWKAVYLPAPVGPATWQLYDLARDPGEIHDLADSQPGKLAELIEHWKRYVSETGVVEGASPFLVR</sequence>